<reference key="1">
    <citation type="submission" date="2000-06" db="EMBL/GenBank/DDBJ databases">
        <title>Structural features of nuclear genes in the centric diatom Thalassiosira weissflogii (Bacillariophyceae).</title>
        <authorList>
            <person name="Armbrust V."/>
        </authorList>
    </citation>
    <scope>NUCLEOTIDE SEQUENCE [MRNA]</scope>
</reference>
<dbReference type="EMBL" id="AF276908">
    <property type="protein sequence ID" value="AAF81906.1"/>
    <property type="molecule type" value="mRNA"/>
</dbReference>
<dbReference type="SMR" id="Q9LKI8"/>
<dbReference type="GO" id="GO:0005737">
    <property type="term" value="C:cytoplasm"/>
    <property type="evidence" value="ECO:0007669"/>
    <property type="project" value="UniProtKB-KW"/>
</dbReference>
<dbReference type="GO" id="GO:0005874">
    <property type="term" value="C:microtubule"/>
    <property type="evidence" value="ECO:0007669"/>
    <property type="project" value="UniProtKB-KW"/>
</dbReference>
<dbReference type="GO" id="GO:0005525">
    <property type="term" value="F:GTP binding"/>
    <property type="evidence" value="ECO:0007669"/>
    <property type="project" value="UniProtKB-KW"/>
</dbReference>
<dbReference type="GO" id="GO:0003924">
    <property type="term" value="F:GTPase activity"/>
    <property type="evidence" value="ECO:0007669"/>
    <property type="project" value="InterPro"/>
</dbReference>
<dbReference type="GO" id="GO:0046872">
    <property type="term" value="F:metal ion binding"/>
    <property type="evidence" value="ECO:0007669"/>
    <property type="project" value="UniProtKB-KW"/>
</dbReference>
<dbReference type="GO" id="GO:0005200">
    <property type="term" value="F:structural constituent of cytoskeleton"/>
    <property type="evidence" value="ECO:0007669"/>
    <property type="project" value="InterPro"/>
</dbReference>
<dbReference type="GO" id="GO:0007017">
    <property type="term" value="P:microtubule-based process"/>
    <property type="evidence" value="ECO:0007669"/>
    <property type="project" value="InterPro"/>
</dbReference>
<dbReference type="CDD" id="cd02187">
    <property type="entry name" value="beta_tubulin"/>
    <property type="match status" value="1"/>
</dbReference>
<dbReference type="FunFam" id="1.10.287.600:FF:000006">
    <property type="entry name" value="Tubulin beta chain"/>
    <property type="match status" value="1"/>
</dbReference>
<dbReference type="FunFam" id="3.30.1330.20:FF:000002">
    <property type="entry name" value="Tubulin beta chain"/>
    <property type="match status" value="1"/>
</dbReference>
<dbReference type="FunFam" id="3.40.50.1440:FF:000003">
    <property type="entry name" value="Tubulin beta chain"/>
    <property type="match status" value="1"/>
</dbReference>
<dbReference type="Gene3D" id="1.10.287.600">
    <property type="entry name" value="Helix hairpin bin"/>
    <property type="match status" value="1"/>
</dbReference>
<dbReference type="Gene3D" id="3.30.1330.20">
    <property type="entry name" value="Tubulin/FtsZ, C-terminal domain"/>
    <property type="match status" value="1"/>
</dbReference>
<dbReference type="Gene3D" id="3.40.50.1440">
    <property type="entry name" value="Tubulin/FtsZ, GTPase domain"/>
    <property type="match status" value="1"/>
</dbReference>
<dbReference type="InterPro" id="IPR013838">
    <property type="entry name" value="Beta-tubulin_BS"/>
</dbReference>
<dbReference type="InterPro" id="IPR002453">
    <property type="entry name" value="Beta_tubulin"/>
</dbReference>
<dbReference type="InterPro" id="IPR008280">
    <property type="entry name" value="Tub_FtsZ_C"/>
</dbReference>
<dbReference type="InterPro" id="IPR000217">
    <property type="entry name" value="Tubulin"/>
</dbReference>
<dbReference type="InterPro" id="IPR037103">
    <property type="entry name" value="Tubulin/FtsZ-like_C"/>
</dbReference>
<dbReference type="InterPro" id="IPR018316">
    <property type="entry name" value="Tubulin/FtsZ_2-layer-sand-dom"/>
</dbReference>
<dbReference type="InterPro" id="IPR036525">
    <property type="entry name" value="Tubulin/FtsZ_GTPase_sf"/>
</dbReference>
<dbReference type="InterPro" id="IPR023123">
    <property type="entry name" value="Tubulin_C"/>
</dbReference>
<dbReference type="InterPro" id="IPR017975">
    <property type="entry name" value="Tubulin_CS"/>
</dbReference>
<dbReference type="InterPro" id="IPR003008">
    <property type="entry name" value="Tubulin_FtsZ_GTPase"/>
</dbReference>
<dbReference type="PANTHER" id="PTHR11588">
    <property type="entry name" value="TUBULIN"/>
    <property type="match status" value="1"/>
</dbReference>
<dbReference type="Pfam" id="PF00091">
    <property type="entry name" value="Tubulin"/>
    <property type="match status" value="1"/>
</dbReference>
<dbReference type="Pfam" id="PF03953">
    <property type="entry name" value="Tubulin_C"/>
    <property type="match status" value="1"/>
</dbReference>
<dbReference type="PRINTS" id="PR01163">
    <property type="entry name" value="BETATUBULIN"/>
</dbReference>
<dbReference type="PRINTS" id="PR01161">
    <property type="entry name" value="TUBULIN"/>
</dbReference>
<dbReference type="SMART" id="SM00864">
    <property type="entry name" value="Tubulin"/>
    <property type="match status" value="1"/>
</dbReference>
<dbReference type="SMART" id="SM00865">
    <property type="entry name" value="Tubulin_C"/>
    <property type="match status" value="1"/>
</dbReference>
<dbReference type="SUPFAM" id="SSF55307">
    <property type="entry name" value="Tubulin C-terminal domain-like"/>
    <property type="match status" value="1"/>
</dbReference>
<dbReference type="SUPFAM" id="SSF52490">
    <property type="entry name" value="Tubulin nucleotide-binding domain-like"/>
    <property type="match status" value="1"/>
</dbReference>
<dbReference type="PROSITE" id="PS00227">
    <property type="entry name" value="TUBULIN"/>
    <property type="match status" value="1"/>
</dbReference>
<dbReference type="PROSITE" id="PS00228">
    <property type="entry name" value="TUBULIN_B_AUTOREG"/>
    <property type="match status" value="1"/>
</dbReference>
<comment type="function">
    <text>Tubulin is the major constituent of microtubules, a cylinder consisting of laterally associated linear protofilaments composed of alpha- and beta-tubulin heterodimers. Microtubules grow by the addition of GTP-tubulin dimers to the microtubule end, where a stabilizing cap forms. Below the cap, tubulin dimers are in GDP-bound state, owing to GTPase activity of alpha-tubulin.</text>
</comment>
<comment type="cofactor">
    <cofactor evidence="2">
        <name>Mg(2+)</name>
        <dbReference type="ChEBI" id="CHEBI:18420"/>
    </cofactor>
</comment>
<comment type="subunit">
    <text>Dimer of alpha and beta chains. A typical microtubule is a hollow water-filled tube with an outer diameter of 25 nm and an inner diameter of 15 nM. Alpha-beta heterodimers associate head-to-tail to form protofilaments running lengthwise along the microtubule wall with the beta-tubulin subunit facing the microtubule plus end conferring a structural polarity. Microtubules usually have 13 protofilaments but different protofilament numbers can be found in some organisms and specialized cells.</text>
</comment>
<comment type="subcellular location">
    <subcellularLocation>
        <location evidence="1">Cytoplasm</location>
        <location evidence="1">Cytoskeleton</location>
    </subcellularLocation>
</comment>
<comment type="similarity">
    <text evidence="4">Belongs to the tubulin family.</text>
</comment>
<accession>Q9LKI8</accession>
<evidence type="ECO:0000250" key="1"/>
<evidence type="ECO:0000250" key="2">
    <source>
        <dbReference type="UniProtKB" id="P68363"/>
    </source>
</evidence>
<evidence type="ECO:0000250" key="3">
    <source>
        <dbReference type="UniProtKB" id="Q13509"/>
    </source>
</evidence>
<evidence type="ECO:0000305" key="4"/>
<name>TBB_THAWE</name>
<keyword id="KW-0963">Cytoplasm</keyword>
<keyword id="KW-0206">Cytoskeleton</keyword>
<keyword id="KW-0342">GTP-binding</keyword>
<keyword id="KW-0460">Magnesium</keyword>
<keyword id="KW-0479">Metal-binding</keyword>
<keyword id="KW-0493">Microtubule</keyword>
<keyword id="KW-0547">Nucleotide-binding</keyword>
<sequence>MREIVHIQGGQCGNQIGAKFWEVMSDEHGVDPTGTYHGDSDLQLERINVYFNEATGGRYVPRAILMDLEPGTMDSVRAGPFGQLFRPDNFVFGQTGAGNNWAKGHYTEGAELIDSVLDVVRKEAESCDCMQGFQLTHSMGGGTGAGMGTLLISKIREEYPDRVMSTYSVIPSPKVSDTVVEPYNATLSVHQLVENADQCFALDNEALYDICFRTLKLTTPTYGDLNHLIAAAVCGTTCCLRFPGQLNCDLRKLAVNMVPFPRLHFFMVGYAPLTSRGSQQYRALTVPELTQQCFDAKNMMCAADPRHGRYLTCAVLFRGRMSSKEVDEQMLNVVNKSSSYFVEWIPNNVKASICDIPPKGLKMATTFVGNTTAVQETWKRVAEQFTVMFRRKAFLHWYTGEGMDEMEFTEAESNMNDLVSEYQQYQDATADEEGEFDEDEMEG</sequence>
<feature type="chain" id="PRO_0000048317" description="Tubulin beta chain">
    <location>
        <begin position="1"/>
        <end position="443"/>
    </location>
</feature>
<feature type="binding site" evidence="3">
    <location>
        <position position="11"/>
    </location>
    <ligand>
        <name>GTP</name>
        <dbReference type="ChEBI" id="CHEBI:37565"/>
    </ligand>
</feature>
<feature type="binding site" evidence="2">
    <location>
        <position position="69"/>
    </location>
    <ligand>
        <name>GTP</name>
        <dbReference type="ChEBI" id="CHEBI:37565"/>
    </ligand>
</feature>
<feature type="binding site" evidence="2">
    <location>
        <position position="69"/>
    </location>
    <ligand>
        <name>Mg(2+)</name>
        <dbReference type="ChEBI" id="CHEBI:18420"/>
    </ligand>
</feature>
<feature type="binding site" evidence="3">
    <location>
        <position position="138"/>
    </location>
    <ligand>
        <name>GTP</name>
        <dbReference type="ChEBI" id="CHEBI:37565"/>
    </ligand>
</feature>
<feature type="binding site" evidence="3">
    <location>
        <position position="142"/>
    </location>
    <ligand>
        <name>GTP</name>
        <dbReference type="ChEBI" id="CHEBI:37565"/>
    </ligand>
</feature>
<feature type="binding site" evidence="3">
    <location>
        <position position="143"/>
    </location>
    <ligand>
        <name>GTP</name>
        <dbReference type="ChEBI" id="CHEBI:37565"/>
    </ligand>
</feature>
<feature type="binding site" evidence="3">
    <location>
        <position position="144"/>
    </location>
    <ligand>
        <name>GTP</name>
        <dbReference type="ChEBI" id="CHEBI:37565"/>
    </ligand>
</feature>
<feature type="binding site" evidence="3">
    <location>
        <position position="204"/>
    </location>
    <ligand>
        <name>GTP</name>
        <dbReference type="ChEBI" id="CHEBI:37565"/>
    </ligand>
</feature>
<feature type="binding site" evidence="3">
    <location>
        <position position="226"/>
    </location>
    <ligand>
        <name>GTP</name>
        <dbReference type="ChEBI" id="CHEBI:37565"/>
    </ligand>
</feature>
<organism>
    <name type="scientific">Thalassiosira weissflogii</name>
    <name type="common">Marine diatom</name>
    <dbReference type="NCBI Taxonomy" id="1577725"/>
    <lineage>
        <taxon>Eukaryota</taxon>
        <taxon>Sar</taxon>
        <taxon>Stramenopiles</taxon>
        <taxon>Ochrophyta</taxon>
        <taxon>Bacillariophyta</taxon>
        <taxon>Coscinodiscophyceae</taxon>
        <taxon>Thalassiosirophycidae</taxon>
        <taxon>Thalassiosirales</taxon>
        <taxon>Thalassiosiraceae</taxon>
        <taxon>Conticribra</taxon>
    </lineage>
</organism>
<proteinExistence type="evidence at transcript level"/>
<protein>
    <recommendedName>
        <fullName>Tubulin beta chain</fullName>
    </recommendedName>
    <alternativeName>
        <fullName>Beta-tubulin</fullName>
    </alternativeName>
</protein>